<gene>
    <name evidence="1" type="primary">rplL</name>
    <name type="ordered locus">VS_2964</name>
</gene>
<comment type="function">
    <text evidence="1">Forms part of the ribosomal stalk which helps the ribosome interact with GTP-bound translation factors. Is thus essential for accurate translation.</text>
</comment>
<comment type="subunit">
    <text evidence="1">Homodimer. Part of the ribosomal stalk of the 50S ribosomal subunit. Forms a multimeric L10(L12)X complex, where L10 forms an elongated spine to which 2 to 4 L12 dimers bind in a sequential fashion. Binds GTP-bound translation factors.</text>
</comment>
<comment type="similarity">
    <text evidence="1">Belongs to the bacterial ribosomal protein bL12 family.</text>
</comment>
<organism>
    <name type="scientific">Vibrio atlanticus (strain LGP32)</name>
    <name type="common">Vibrio splendidus (strain Mel32)</name>
    <dbReference type="NCBI Taxonomy" id="575788"/>
    <lineage>
        <taxon>Bacteria</taxon>
        <taxon>Pseudomonadati</taxon>
        <taxon>Pseudomonadota</taxon>
        <taxon>Gammaproteobacteria</taxon>
        <taxon>Vibrionales</taxon>
        <taxon>Vibrionaceae</taxon>
        <taxon>Vibrio</taxon>
    </lineage>
</organism>
<name>RL7_VIBA3</name>
<dbReference type="EMBL" id="FM954972">
    <property type="protein sequence ID" value="CAV20260.1"/>
    <property type="molecule type" value="Genomic_DNA"/>
</dbReference>
<dbReference type="SMR" id="B7VM70"/>
<dbReference type="STRING" id="575788.VS_2964"/>
<dbReference type="KEGG" id="vsp:VS_2964"/>
<dbReference type="eggNOG" id="COG0222">
    <property type="taxonomic scope" value="Bacteria"/>
</dbReference>
<dbReference type="HOGENOM" id="CLU_086499_3_2_6"/>
<dbReference type="Proteomes" id="UP000009100">
    <property type="component" value="Chromosome 1"/>
</dbReference>
<dbReference type="GO" id="GO:0022625">
    <property type="term" value="C:cytosolic large ribosomal subunit"/>
    <property type="evidence" value="ECO:0007669"/>
    <property type="project" value="TreeGrafter"/>
</dbReference>
<dbReference type="GO" id="GO:0003729">
    <property type="term" value="F:mRNA binding"/>
    <property type="evidence" value="ECO:0007669"/>
    <property type="project" value="TreeGrafter"/>
</dbReference>
<dbReference type="GO" id="GO:0003735">
    <property type="term" value="F:structural constituent of ribosome"/>
    <property type="evidence" value="ECO:0007669"/>
    <property type="project" value="InterPro"/>
</dbReference>
<dbReference type="GO" id="GO:0006412">
    <property type="term" value="P:translation"/>
    <property type="evidence" value="ECO:0007669"/>
    <property type="project" value="UniProtKB-UniRule"/>
</dbReference>
<dbReference type="CDD" id="cd00387">
    <property type="entry name" value="Ribosomal_L7_L12"/>
    <property type="match status" value="1"/>
</dbReference>
<dbReference type="FunFam" id="3.30.1390.10:FF:000001">
    <property type="entry name" value="50S ribosomal protein L7/L12"/>
    <property type="match status" value="1"/>
</dbReference>
<dbReference type="Gene3D" id="3.30.1390.10">
    <property type="match status" value="1"/>
</dbReference>
<dbReference type="Gene3D" id="1.20.5.710">
    <property type="entry name" value="Single helix bin"/>
    <property type="match status" value="1"/>
</dbReference>
<dbReference type="HAMAP" id="MF_00368">
    <property type="entry name" value="Ribosomal_bL12"/>
    <property type="match status" value="1"/>
</dbReference>
<dbReference type="InterPro" id="IPR000206">
    <property type="entry name" value="Ribosomal_bL12"/>
</dbReference>
<dbReference type="InterPro" id="IPR013823">
    <property type="entry name" value="Ribosomal_bL12_C"/>
</dbReference>
<dbReference type="InterPro" id="IPR014719">
    <property type="entry name" value="Ribosomal_bL12_C/ClpS-like"/>
</dbReference>
<dbReference type="InterPro" id="IPR008932">
    <property type="entry name" value="Ribosomal_bL12_oligo"/>
</dbReference>
<dbReference type="InterPro" id="IPR036235">
    <property type="entry name" value="Ribosomal_bL12_oligo_N_sf"/>
</dbReference>
<dbReference type="NCBIfam" id="TIGR00855">
    <property type="entry name" value="L12"/>
    <property type="match status" value="1"/>
</dbReference>
<dbReference type="PANTHER" id="PTHR45987">
    <property type="entry name" value="39S RIBOSOMAL PROTEIN L12"/>
    <property type="match status" value="1"/>
</dbReference>
<dbReference type="PANTHER" id="PTHR45987:SF4">
    <property type="entry name" value="LARGE RIBOSOMAL SUBUNIT PROTEIN BL12M"/>
    <property type="match status" value="1"/>
</dbReference>
<dbReference type="Pfam" id="PF00542">
    <property type="entry name" value="Ribosomal_L12"/>
    <property type="match status" value="1"/>
</dbReference>
<dbReference type="Pfam" id="PF16320">
    <property type="entry name" value="Ribosomal_L12_N"/>
    <property type="match status" value="1"/>
</dbReference>
<dbReference type="SUPFAM" id="SSF54736">
    <property type="entry name" value="ClpS-like"/>
    <property type="match status" value="1"/>
</dbReference>
<dbReference type="SUPFAM" id="SSF48300">
    <property type="entry name" value="Ribosomal protein L7/12, oligomerisation (N-terminal) domain"/>
    <property type="match status" value="1"/>
</dbReference>
<feature type="chain" id="PRO_1000195826" description="Large ribosomal subunit protein bL12">
    <location>
        <begin position="1"/>
        <end position="121"/>
    </location>
</feature>
<accession>B7VM70</accession>
<proteinExistence type="inferred from homology"/>
<reference key="1">
    <citation type="submission" date="2009-02" db="EMBL/GenBank/DDBJ databases">
        <title>Vibrio splendidus str. LGP32 complete genome.</title>
        <authorList>
            <person name="Mazel D."/>
            <person name="Le Roux F."/>
        </authorList>
    </citation>
    <scope>NUCLEOTIDE SEQUENCE [LARGE SCALE GENOMIC DNA]</scope>
    <source>
        <strain>LGP32</strain>
    </source>
</reference>
<keyword id="KW-0687">Ribonucleoprotein</keyword>
<keyword id="KW-0689">Ribosomal protein</keyword>
<protein>
    <recommendedName>
        <fullName evidence="1">Large ribosomal subunit protein bL12</fullName>
    </recommendedName>
    <alternativeName>
        <fullName evidence="2">50S ribosomal protein L7/L12</fullName>
    </alternativeName>
</protein>
<evidence type="ECO:0000255" key="1">
    <source>
        <dbReference type="HAMAP-Rule" id="MF_00368"/>
    </source>
</evidence>
<evidence type="ECO:0000305" key="2"/>
<sequence>MSITNEQILDAVAEMSVMQVVELIEAMEEKFGVTAAAAVVAGGASAEAAAEQTEFDVILTAAGANKVQVIKAVRGATGLGLKEAKGLVDSAPAALKEGVDKAEAEALKAQLEEAGASVEVK</sequence>